<dbReference type="EMBL" id="AE004092">
    <property type="protein sequence ID" value="AAK34502.1"/>
    <property type="molecule type" value="Genomic_DNA"/>
</dbReference>
<dbReference type="EMBL" id="CP000017">
    <property type="protein sequence ID" value="AAZ52117.1"/>
    <property type="status" value="ALT_INIT"/>
    <property type="molecule type" value="Genomic_DNA"/>
</dbReference>
<dbReference type="RefSeq" id="NP_269781.1">
    <property type="nucleotide sequence ID" value="NC_002737.2"/>
</dbReference>
<dbReference type="SMR" id="P68892"/>
<dbReference type="PaxDb" id="1314-HKU360_01554"/>
<dbReference type="KEGG" id="spy:SPy_1761"/>
<dbReference type="KEGG" id="spz:M5005_Spy1499"/>
<dbReference type="PATRIC" id="fig|160490.10.peg.1532"/>
<dbReference type="HOGENOM" id="CLU_057217_6_3_9"/>
<dbReference type="OMA" id="PHRHQAI"/>
<dbReference type="Proteomes" id="UP000000750">
    <property type="component" value="Chromosome"/>
</dbReference>
<dbReference type="GO" id="GO:0005737">
    <property type="term" value="C:cytoplasm"/>
    <property type="evidence" value="ECO:0007669"/>
    <property type="project" value="UniProtKB-SubCell"/>
</dbReference>
<dbReference type="GO" id="GO:0000774">
    <property type="term" value="F:adenyl-nucleotide exchange factor activity"/>
    <property type="evidence" value="ECO:0007669"/>
    <property type="project" value="InterPro"/>
</dbReference>
<dbReference type="GO" id="GO:0042803">
    <property type="term" value="F:protein homodimerization activity"/>
    <property type="evidence" value="ECO:0007669"/>
    <property type="project" value="InterPro"/>
</dbReference>
<dbReference type="GO" id="GO:0051087">
    <property type="term" value="F:protein-folding chaperone binding"/>
    <property type="evidence" value="ECO:0007669"/>
    <property type="project" value="InterPro"/>
</dbReference>
<dbReference type="GO" id="GO:0051082">
    <property type="term" value="F:unfolded protein binding"/>
    <property type="evidence" value="ECO:0007669"/>
    <property type="project" value="TreeGrafter"/>
</dbReference>
<dbReference type="GO" id="GO:0006457">
    <property type="term" value="P:protein folding"/>
    <property type="evidence" value="ECO:0007669"/>
    <property type="project" value="InterPro"/>
</dbReference>
<dbReference type="CDD" id="cd00446">
    <property type="entry name" value="GrpE"/>
    <property type="match status" value="1"/>
</dbReference>
<dbReference type="Gene3D" id="3.90.20.20">
    <property type="match status" value="1"/>
</dbReference>
<dbReference type="Gene3D" id="2.30.22.10">
    <property type="entry name" value="Head domain of nucleotide exchange factor GrpE"/>
    <property type="match status" value="1"/>
</dbReference>
<dbReference type="HAMAP" id="MF_01151">
    <property type="entry name" value="GrpE"/>
    <property type="match status" value="1"/>
</dbReference>
<dbReference type="InterPro" id="IPR000740">
    <property type="entry name" value="GrpE"/>
</dbReference>
<dbReference type="InterPro" id="IPR013805">
    <property type="entry name" value="GrpE_coiled_coil"/>
</dbReference>
<dbReference type="InterPro" id="IPR009012">
    <property type="entry name" value="GrpE_head"/>
</dbReference>
<dbReference type="NCBIfam" id="NF010738">
    <property type="entry name" value="PRK14140.1"/>
    <property type="match status" value="1"/>
</dbReference>
<dbReference type="NCBIfam" id="NF010753">
    <property type="entry name" value="PRK14156.1"/>
    <property type="match status" value="1"/>
</dbReference>
<dbReference type="PANTHER" id="PTHR21237">
    <property type="entry name" value="GRPE PROTEIN"/>
    <property type="match status" value="1"/>
</dbReference>
<dbReference type="PANTHER" id="PTHR21237:SF23">
    <property type="entry name" value="GRPE PROTEIN HOMOLOG, MITOCHONDRIAL"/>
    <property type="match status" value="1"/>
</dbReference>
<dbReference type="Pfam" id="PF01025">
    <property type="entry name" value="GrpE"/>
    <property type="match status" value="1"/>
</dbReference>
<dbReference type="PRINTS" id="PR00773">
    <property type="entry name" value="GRPEPROTEIN"/>
</dbReference>
<dbReference type="SUPFAM" id="SSF58014">
    <property type="entry name" value="Coiled-coil domain of nucleotide exchange factor GrpE"/>
    <property type="match status" value="1"/>
</dbReference>
<dbReference type="SUPFAM" id="SSF51064">
    <property type="entry name" value="Head domain of nucleotide exchange factor GrpE"/>
    <property type="match status" value="1"/>
</dbReference>
<dbReference type="PROSITE" id="PS01071">
    <property type="entry name" value="GRPE"/>
    <property type="match status" value="1"/>
</dbReference>
<organism>
    <name type="scientific">Streptococcus pyogenes serotype M1</name>
    <dbReference type="NCBI Taxonomy" id="301447"/>
    <lineage>
        <taxon>Bacteria</taxon>
        <taxon>Bacillati</taxon>
        <taxon>Bacillota</taxon>
        <taxon>Bacilli</taxon>
        <taxon>Lactobacillales</taxon>
        <taxon>Streptococcaceae</taxon>
        <taxon>Streptococcus</taxon>
    </lineage>
</organism>
<keyword id="KW-0143">Chaperone</keyword>
<keyword id="KW-0963">Cytoplasm</keyword>
<keyword id="KW-1185">Reference proteome</keyword>
<keyword id="KW-0346">Stress response</keyword>
<reference key="1">
    <citation type="journal article" date="2001" name="Proc. Natl. Acad. Sci. U.S.A.">
        <title>Complete genome sequence of an M1 strain of Streptococcus pyogenes.</title>
        <authorList>
            <person name="Ferretti J.J."/>
            <person name="McShan W.M."/>
            <person name="Ajdic D.J."/>
            <person name="Savic D.J."/>
            <person name="Savic G."/>
            <person name="Lyon K."/>
            <person name="Primeaux C."/>
            <person name="Sezate S."/>
            <person name="Suvorov A.N."/>
            <person name="Kenton S."/>
            <person name="Lai H.S."/>
            <person name="Lin S.P."/>
            <person name="Qian Y."/>
            <person name="Jia H.G."/>
            <person name="Najar F.Z."/>
            <person name="Ren Q."/>
            <person name="Zhu H."/>
            <person name="Song L."/>
            <person name="White J."/>
            <person name="Yuan X."/>
            <person name="Clifton S.W."/>
            <person name="Roe B.A."/>
            <person name="McLaughlin R.E."/>
        </authorList>
    </citation>
    <scope>NUCLEOTIDE SEQUENCE [LARGE SCALE GENOMIC DNA]</scope>
    <source>
        <strain>ATCC 700294 / SF370 / Serotype M1</strain>
    </source>
</reference>
<reference key="2">
    <citation type="journal article" date="2005" name="J. Infect. Dis.">
        <title>Evolutionary origin and emergence of a highly successful clone of serotype M1 group A Streptococcus involved multiple horizontal gene transfer events.</title>
        <authorList>
            <person name="Sumby P."/>
            <person name="Porcella S.F."/>
            <person name="Madrigal A.G."/>
            <person name="Barbian K.D."/>
            <person name="Virtaneva K."/>
            <person name="Ricklefs S.M."/>
            <person name="Sturdevant D.E."/>
            <person name="Graham M.R."/>
            <person name="Vuopio-Varkila J."/>
            <person name="Hoe N.P."/>
            <person name="Musser J.M."/>
        </authorList>
    </citation>
    <scope>NUCLEOTIDE SEQUENCE [LARGE SCALE GENOMIC DNA]</scope>
    <source>
        <strain>ATCC BAA-947 / MGAS5005 / Serotype M1</strain>
    </source>
</reference>
<evidence type="ECO:0000255" key="1">
    <source>
        <dbReference type="HAMAP-Rule" id="MF_01151"/>
    </source>
</evidence>
<evidence type="ECO:0000256" key="2">
    <source>
        <dbReference type="SAM" id="MobiDB-lite"/>
    </source>
</evidence>
<evidence type="ECO:0000305" key="3"/>
<name>GRPE_STRP1</name>
<comment type="function">
    <text evidence="1">Participates actively in the response to hyperosmotic and heat shock by preventing the aggregation of stress-denatured proteins, in association with DnaK and GrpE. It is the nucleotide exchange factor for DnaK and may function as a thermosensor. Unfolded proteins bind initially to DnaJ; upon interaction with the DnaJ-bound protein, DnaK hydrolyzes its bound ATP, resulting in the formation of a stable complex. GrpE releases ADP from DnaK; ATP binding to DnaK triggers the release of the substrate protein, thus completing the reaction cycle. Several rounds of ATP-dependent interactions between DnaJ, DnaK and GrpE are required for fully efficient folding.</text>
</comment>
<comment type="subunit">
    <text evidence="1">Homodimer.</text>
</comment>
<comment type="subcellular location">
    <subcellularLocation>
        <location evidence="1">Cytoplasm</location>
    </subcellularLocation>
</comment>
<comment type="similarity">
    <text evidence="1">Belongs to the GrpE family.</text>
</comment>
<comment type="sequence caution" evidence="3">
    <conflict type="erroneous initiation">
        <sequence resource="EMBL-CDS" id="AAZ52117"/>
    </conflict>
</comment>
<sequence length="190" mass="22055">MAVFNKLFKRRHSVSEEIKKDDLQEEVEATETEETVEEVIEETPEKSELELANERADEFENKYLRAHAEMQNIQRRSSEERQQLQRYRSQDLAKAILPSLDNLERALAVEGLTDDVKKGLEMTRDSLIQALKEEGVEEVEVDSFDHNFHMAVQTLPADDEHPADSIAEVFQKGYKLHERLLRPAMVVVYN</sequence>
<accession>P68892</accession>
<accession>P63190</accession>
<accession>P82581</accession>
<accession>Q48X08</accession>
<accession>Q99YC8</accession>
<protein>
    <recommendedName>
        <fullName evidence="1">Protein GrpE</fullName>
    </recommendedName>
    <alternativeName>
        <fullName evidence="1">HSP-70 cofactor</fullName>
    </alternativeName>
</protein>
<gene>
    <name evidence="1" type="primary">grpE</name>
    <name type="ordered locus">SPy_1761</name>
    <name type="ordered locus">M5005_Spy1499</name>
</gene>
<proteinExistence type="inferred from homology"/>
<feature type="chain" id="PRO_0000113873" description="Protein GrpE">
    <location>
        <begin position="1"/>
        <end position="190"/>
    </location>
</feature>
<feature type="region of interest" description="Disordered" evidence="2">
    <location>
        <begin position="21"/>
        <end position="49"/>
    </location>
</feature>
<feature type="compositionally biased region" description="Acidic residues" evidence="2">
    <location>
        <begin position="23"/>
        <end position="42"/>
    </location>
</feature>